<sequence>MEYLPLFAQLKQRPVLVVGGGEVALRKIALLRRAGACVSVVAKKLHPELAALEQEGALRWLAQSFEPAQLDAVFLVIAATSDAALNRRVFDEANARQRLVNVVDDQPLCSFIFPSIVDRSPLIVAISSSGNAPVLARLLREKIESLLPASLGRMAEVAGGFRDRIKARIPTTDGRRRFWEKAFRGRFASLMAAGDTRAAEAVLEAELDAPQGPQGEIILVGAGPGDAGLLTLRGLQVMQQADVVLYDHLVSDGVLDLVRRDADRICVGKRAGAHAVAQHETNQMLIDFAREGKTVVRLKGGDPFIFGRGGEELEAAKAAGVPFQVVPGVTAASGATAYAGIPLTHRDYAQSAVFVTGHYKPDSEPFDWALLAKSRQTLAIYMGTMKAAEISQQLIAHGRDATTPVAVISRGTREDQRVLTGTLDTLNILAKDAPMPALLVVGEVVQLHQQLAWFQHSTDAENLRSSVVNLA</sequence>
<accession>A7MJ67</accession>
<feature type="chain" id="PRO_0000330502" description="Siroheme synthase 1">
    <location>
        <begin position="1"/>
        <end position="471"/>
    </location>
</feature>
<feature type="region of interest" description="Precorrin-2 dehydrogenase /sirohydrochlorin ferrochelatase" evidence="1">
    <location>
        <begin position="1"/>
        <end position="203"/>
    </location>
</feature>
<feature type="region of interest" description="Uroporphyrinogen-III C-methyltransferase" evidence="1">
    <location>
        <begin position="215"/>
        <end position="471"/>
    </location>
</feature>
<feature type="active site" description="Proton acceptor" evidence="1">
    <location>
        <position position="247"/>
    </location>
</feature>
<feature type="active site" description="Proton donor" evidence="1">
    <location>
        <position position="269"/>
    </location>
</feature>
<feature type="binding site" evidence="1">
    <location>
        <begin position="22"/>
        <end position="23"/>
    </location>
    <ligand>
        <name>NAD(+)</name>
        <dbReference type="ChEBI" id="CHEBI:57540"/>
    </ligand>
</feature>
<feature type="binding site" evidence="1">
    <location>
        <begin position="43"/>
        <end position="44"/>
    </location>
    <ligand>
        <name>NAD(+)</name>
        <dbReference type="ChEBI" id="CHEBI:57540"/>
    </ligand>
</feature>
<feature type="binding site" evidence="1">
    <location>
        <position position="224"/>
    </location>
    <ligand>
        <name>S-adenosyl-L-methionine</name>
        <dbReference type="ChEBI" id="CHEBI:59789"/>
    </ligand>
</feature>
<feature type="binding site" evidence="1">
    <location>
        <begin position="300"/>
        <end position="302"/>
    </location>
    <ligand>
        <name>S-adenosyl-L-methionine</name>
        <dbReference type="ChEBI" id="CHEBI:59789"/>
    </ligand>
</feature>
<feature type="binding site" evidence="1">
    <location>
        <position position="305"/>
    </location>
    <ligand>
        <name>S-adenosyl-L-methionine</name>
        <dbReference type="ChEBI" id="CHEBI:59789"/>
    </ligand>
</feature>
<feature type="binding site" evidence="1">
    <location>
        <begin position="330"/>
        <end position="331"/>
    </location>
    <ligand>
        <name>S-adenosyl-L-methionine</name>
        <dbReference type="ChEBI" id="CHEBI:59789"/>
    </ligand>
</feature>
<feature type="binding site" evidence="1">
    <location>
        <position position="382"/>
    </location>
    <ligand>
        <name>S-adenosyl-L-methionine</name>
        <dbReference type="ChEBI" id="CHEBI:59789"/>
    </ligand>
</feature>
<feature type="binding site" evidence="1">
    <location>
        <position position="411"/>
    </location>
    <ligand>
        <name>S-adenosyl-L-methionine</name>
        <dbReference type="ChEBI" id="CHEBI:59789"/>
    </ligand>
</feature>
<feature type="modified residue" description="Phosphoserine" evidence="1">
    <location>
        <position position="128"/>
    </location>
</feature>
<name>CYSG1_CROS8</name>
<proteinExistence type="inferred from homology"/>
<reference key="1">
    <citation type="journal article" date="2010" name="PLoS ONE">
        <title>Genome sequence of Cronobacter sakazakii BAA-894 and comparative genomic hybridization analysis with other Cronobacter species.</title>
        <authorList>
            <person name="Kucerova E."/>
            <person name="Clifton S.W."/>
            <person name="Xia X.Q."/>
            <person name="Long F."/>
            <person name="Porwollik S."/>
            <person name="Fulton L."/>
            <person name="Fronick C."/>
            <person name="Minx P."/>
            <person name="Kyung K."/>
            <person name="Warren W."/>
            <person name="Fulton R."/>
            <person name="Feng D."/>
            <person name="Wollam A."/>
            <person name="Shah N."/>
            <person name="Bhonagiri V."/>
            <person name="Nash W.E."/>
            <person name="Hallsworth-Pepin K."/>
            <person name="Wilson R.K."/>
            <person name="McClelland M."/>
            <person name="Forsythe S.J."/>
        </authorList>
    </citation>
    <scope>NUCLEOTIDE SEQUENCE [LARGE SCALE GENOMIC DNA]</scope>
    <source>
        <strain>ATCC BAA-894</strain>
    </source>
</reference>
<protein>
    <recommendedName>
        <fullName evidence="1">Siroheme synthase 1</fullName>
    </recommendedName>
    <domain>
        <recommendedName>
            <fullName evidence="1">Uroporphyrinogen-III C-methyltransferase 1</fullName>
            <shortName evidence="1">Urogen III methylase 1</shortName>
            <ecNumber evidence="1">2.1.1.107</ecNumber>
        </recommendedName>
        <alternativeName>
            <fullName evidence="1">SUMT 1</fullName>
        </alternativeName>
        <alternativeName>
            <fullName evidence="1">Uroporphyrinogen III methylase 1</fullName>
            <shortName evidence="1">UROM 1</shortName>
        </alternativeName>
    </domain>
    <domain>
        <recommendedName>
            <fullName evidence="1">Precorrin-2 dehydrogenase 1</fullName>
            <ecNumber evidence="1">1.3.1.76</ecNumber>
        </recommendedName>
    </domain>
    <domain>
        <recommendedName>
            <fullName evidence="1">Sirohydrochlorin ferrochelatase 1</fullName>
            <ecNumber evidence="1">4.99.1.4</ecNumber>
        </recommendedName>
    </domain>
</protein>
<comment type="function">
    <text evidence="1">Multifunctional enzyme that catalyzes the SAM-dependent methylations of uroporphyrinogen III at position C-2 and C-7 to form precorrin-2 via precorrin-1. Then it catalyzes the NAD-dependent ring dehydrogenation of precorrin-2 to yield sirohydrochlorin. Finally, it catalyzes the ferrochelation of sirohydrochlorin to yield siroheme.</text>
</comment>
<comment type="catalytic activity">
    <reaction evidence="1">
        <text>uroporphyrinogen III + 2 S-adenosyl-L-methionine = precorrin-2 + 2 S-adenosyl-L-homocysteine + H(+)</text>
        <dbReference type="Rhea" id="RHEA:32459"/>
        <dbReference type="ChEBI" id="CHEBI:15378"/>
        <dbReference type="ChEBI" id="CHEBI:57308"/>
        <dbReference type="ChEBI" id="CHEBI:57856"/>
        <dbReference type="ChEBI" id="CHEBI:58827"/>
        <dbReference type="ChEBI" id="CHEBI:59789"/>
        <dbReference type="EC" id="2.1.1.107"/>
    </reaction>
</comment>
<comment type="catalytic activity">
    <reaction evidence="1">
        <text>precorrin-2 + NAD(+) = sirohydrochlorin + NADH + 2 H(+)</text>
        <dbReference type="Rhea" id="RHEA:15613"/>
        <dbReference type="ChEBI" id="CHEBI:15378"/>
        <dbReference type="ChEBI" id="CHEBI:57540"/>
        <dbReference type="ChEBI" id="CHEBI:57945"/>
        <dbReference type="ChEBI" id="CHEBI:58351"/>
        <dbReference type="ChEBI" id="CHEBI:58827"/>
        <dbReference type="EC" id="1.3.1.76"/>
    </reaction>
</comment>
<comment type="catalytic activity">
    <reaction evidence="1">
        <text>siroheme + 2 H(+) = sirohydrochlorin + Fe(2+)</text>
        <dbReference type="Rhea" id="RHEA:24360"/>
        <dbReference type="ChEBI" id="CHEBI:15378"/>
        <dbReference type="ChEBI" id="CHEBI:29033"/>
        <dbReference type="ChEBI" id="CHEBI:58351"/>
        <dbReference type="ChEBI" id="CHEBI:60052"/>
        <dbReference type="EC" id="4.99.1.4"/>
    </reaction>
</comment>
<comment type="pathway">
    <text evidence="1">Cofactor biosynthesis; adenosylcobalamin biosynthesis; precorrin-2 from uroporphyrinogen III: step 1/1.</text>
</comment>
<comment type="pathway">
    <text evidence="1">Cofactor biosynthesis; adenosylcobalamin biosynthesis; sirohydrochlorin from precorrin-2: step 1/1.</text>
</comment>
<comment type="pathway">
    <text evidence="1">Porphyrin-containing compound metabolism; siroheme biosynthesis; precorrin-2 from uroporphyrinogen III: step 1/1.</text>
</comment>
<comment type="pathway">
    <text evidence="1">Porphyrin-containing compound metabolism; siroheme biosynthesis; siroheme from sirohydrochlorin: step 1/1.</text>
</comment>
<comment type="pathway">
    <text evidence="1">Porphyrin-containing compound metabolism; siroheme biosynthesis; sirohydrochlorin from precorrin-2: step 1/1.</text>
</comment>
<comment type="similarity">
    <text evidence="1">In the N-terminal section; belongs to the precorrin-2 dehydrogenase / sirohydrochlorin ferrochelatase family.</text>
</comment>
<comment type="similarity">
    <text evidence="1">In the C-terminal section; belongs to the precorrin methyltransferase family.</text>
</comment>
<dbReference type="EC" id="2.1.1.107" evidence="1"/>
<dbReference type="EC" id="1.3.1.76" evidence="1"/>
<dbReference type="EC" id="4.99.1.4" evidence="1"/>
<dbReference type="EMBL" id="CP000783">
    <property type="protein sequence ID" value="ABU75829.1"/>
    <property type="molecule type" value="Genomic_DNA"/>
</dbReference>
<dbReference type="SMR" id="A7MJ67"/>
<dbReference type="KEGG" id="esa:ESA_00538"/>
<dbReference type="PATRIC" id="fig|290339.8.peg.482"/>
<dbReference type="HOGENOM" id="CLU_011276_2_0_6"/>
<dbReference type="UniPathway" id="UPA00148">
    <property type="reaction ID" value="UER00211"/>
</dbReference>
<dbReference type="UniPathway" id="UPA00148">
    <property type="reaction ID" value="UER00222"/>
</dbReference>
<dbReference type="UniPathway" id="UPA00262">
    <property type="reaction ID" value="UER00211"/>
</dbReference>
<dbReference type="UniPathway" id="UPA00262">
    <property type="reaction ID" value="UER00222"/>
</dbReference>
<dbReference type="UniPathway" id="UPA00262">
    <property type="reaction ID" value="UER00376"/>
</dbReference>
<dbReference type="Proteomes" id="UP000000260">
    <property type="component" value="Chromosome"/>
</dbReference>
<dbReference type="GO" id="GO:0051287">
    <property type="term" value="F:NAD binding"/>
    <property type="evidence" value="ECO:0007669"/>
    <property type="project" value="InterPro"/>
</dbReference>
<dbReference type="GO" id="GO:0043115">
    <property type="term" value="F:precorrin-2 dehydrogenase activity"/>
    <property type="evidence" value="ECO:0007669"/>
    <property type="project" value="UniProtKB-UniRule"/>
</dbReference>
<dbReference type="GO" id="GO:0051266">
    <property type="term" value="F:sirohydrochlorin ferrochelatase activity"/>
    <property type="evidence" value="ECO:0007669"/>
    <property type="project" value="UniProtKB-EC"/>
</dbReference>
<dbReference type="GO" id="GO:0004851">
    <property type="term" value="F:uroporphyrin-III C-methyltransferase activity"/>
    <property type="evidence" value="ECO:0007669"/>
    <property type="project" value="UniProtKB-UniRule"/>
</dbReference>
<dbReference type="GO" id="GO:0009236">
    <property type="term" value="P:cobalamin biosynthetic process"/>
    <property type="evidence" value="ECO:0007669"/>
    <property type="project" value="UniProtKB-UniRule"/>
</dbReference>
<dbReference type="GO" id="GO:0032259">
    <property type="term" value="P:methylation"/>
    <property type="evidence" value="ECO:0007669"/>
    <property type="project" value="UniProtKB-KW"/>
</dbReference>
<dbReference type="GO" id="GO:0019354">
    <property type="term" value="P:siroheme biosynthetic process"/>
    <property type="evidence" value="ECO:0007669"/>
    <property type="project" value="UniProtKB-UniRule"/>
</dbReference>
<dbReference type="CDD" id="cd11642">
    <property type="entry name" value="SUMT"/>
    <property type="match status" value="1"/>
</dbReference>
<dbReference type="FunFam" id="3.30.160.110:FF:000001">
    <property type="entry name" value="Siroheme synthase"/>
    <property type="match status" value="1"/>
</dbReference>
<dbReference type="FunFam" id="3.30.950.10:FF:000001">
    <property type="entry name" value="Siroheme synthase"/>
    <property type="match status" value="1"/>
</dbReference>
<dbReference type="FunFam" id="3.40.1010.10:FF:000001">
    <property type="entry name" value="Siroheme synthase"/>
    <property type="match status" value="1"/>
</dbReference>
<dbReference type="Gene3D" id="3.40.1010.10">
    <property type="entry name" value="Cobalt-precorrin-4 Transmethylase, Domain 1"/>
    <property type="match status" value="1"/>
</dbReference>
<dbReference type="Gene3D" id="3.30.950.10">
    <property type="entry name" value="Methyltransferase, Cobalt-precorrin-4 Transmethylase, Domain 2"/>
    <property type="match status" value="1"/>
</dbReference>
<dbReference type="Gene3D" id="3.40.50.720">
    <property type="entry name" value="NAD(P)-binding Rossmann-like Domain"/>
    <property type="match status" value="1"/>
</dbReference>
<dbReference type="Gene3D" id="1.10.8.210">
    <property type="entry name" value="Sirohaem synthase, dimerisation domain"/>
    <property type="match status" value="1"/>
</dbReference>
<dbReference type="Gene3D" id="3.30.160.110">
    <property type="entry name" value="Siroheme synthase, domain 2"/>
    <property type="match status" value="1"/>
</dbReference>
<dbReference type="HAMAP" id="MF_01646">
    <property type="entry name" value="Siroheme_synth"/>
    <property type="match status" value="1"/>
</dbReference>
<dbReference type="InterPro" id="IPR000878">
    <property type="entry name" value="4pyrrol_Mease"/>
</dbReference>
<dbReference type="InterPro" id="IPR035996">
    <property type="entry name" value="4pyrrol_Methylase_sf"/>
</dbReference>
<dbReference type="InterPro" id="IPR014777">
    <property type="entry name" value="4pyrrole_Mease_sub1"/>
</dbReference>
<dbReference type="InterPro" id="IPR014776">
    <property type="entry name" value="4pyrrole_Mease_sub2"/>
</dbReference>
<dbReference type="InterPro" id="IPR006366">
    <property type="entry name" value="CobA/CysG_C"/>
</dbReference>
<dbReference type="InterPro" id="IPR036291">
    <property type="entry name" value="NAD(P)-bd_dom_sf"/>
</dbReference>
<dbReference type="InterPro" id="IPR050161">
    <property type="entry name" value="Siro_Cobalamin_biosynth"/>
</dbReference>
<dbReference type="InterPro" id="IPR037115">
    <property type="entry name" value="Sirohaem_synt_dimer_dom_sf"/>
</dbReference>
<dbReference type="InterPro" id="IPR012409">
    <property type="entry name" value="Sirohaem_synth"/>
</dbReference>
<dbReference type="InterPro" id="IPR028281">
    <property type="entry name" value="Sirohaem_synthase_central"/>
</dbReference>
<dbReference type="InterPro" id="IPR019478">
    <property type="entry name" value="Sirohaem_synthase_dimer_dom"/>
</dbReference>
<dbReference type="InterPro" id="IPR006367">
    <property type="entry name" value="Sirohaem_synthase_N"/>
</dbReference>
<dbReference type="InterPro" id="IPR003043">
    <property type="entry name" value="Uropor_MeTrfase_CS"/>
</dbReference>
<dbReference type="NCBIfam" id="TIGR01469">
    <property type="entry name" value="cobA_cysG_Cterm"/>
    <property type="match status" value="1"/>
</dbReference>
<dbReference type="NCBIfam" id="TIGR01470">
    <property type="entry name" value="cysG_Nterm"/>
    <property type="match status" value="1"/>
</dbReference>
<dbReference type="NCBIfam" id="NF004790">
    <property type="entry name" value="PRK06136.1"/>
    <property type="match status" value="1"/>
</dbReference>
<dbReference type="NCBIfam" id="NF007922">
    <property type="entry name" value="PRK10637.1"/>
    <property type="match status" value="1"/>
</dbReference>
<dbReference type="PANTHER" id="PTHR45790:SF1">
    <property type="entry name" value="SIROHEME SYNTHASE"/>
    <property type="match status" value="1"/>
</dbReference>
<dbReference type="PANTHER" id="PTHR45790">
    <property type="entry name" value="SIROHEME SYNTHASE-RELATED"/>
    <property type="match status" value="1"/>
</dbReference>
<dbReference type="Pfam" id="PF10414">
    <property type="entry name" value="CysG_dimeriser"/>
    <property type="match status" value="1"/>
</dbReference>
<dbReference type="Pfam" id="PF13241">
    <property type="entry name" value="NAD_binding_7"/>
    <property type="match status" value="1"/>
</dbReference>
<dbReference type="Pfam" id="PF14824">
    <property type="entry name" value="Sirohm_synth_M"/>
    <property type="match status" value="1"/>
</dbReference>
<dbReference type="Pfam" id="PF00590">
    <property type="entry name" value="TP_methylase"/>
    <property type="match status" value="1"/>
</dbReference>
<dbReference type="PIRSF" id="PIRSF036426">
    <property type="entry name" value="Sirohaem_synth"/>
    <property type="match status" value="1"/>
</dbReference>
<dbReference type="SUPFAM" id="SSF51735">
    <property type="entry name" value="NAD(P)-binding Rossmann-fold domains"/>
    <property type="match status" value="1"/>
</dbReference>
<dbReference type="SUPFAM" id="SSF75615">
    <property type="entry name" value="Siroheme synthase middle domains-like"/>
    <property type="match status" value="1"/>
</dbReference>
<dbReference type="SUPFAM" id="SSF53790">
    <property type="entry name" value="Tetrapyrrole methylase"/>
    <property type="match status" value="1"/>
</dbReference>
<dbReference type="PROSITE" id="PS00839">
    <property type="entry name" value="SUMT_1"/>
    <property type="match status" value="1"/>
</dbReference>
<dbReference type="PROSITE" id="PS00840">
    <property type="entry name" value="SUMT_2"/>
    <property type="match status" value="1"/>
</dbReference>
<keyword id="KW-0169">Cobalamin biosynthesis</keyword>
<keyword id="KW-0456">Lyase</keyword>
<keyword id="KW-0489">Methyltransferase</keyword>
<keyword id="KW-0511">Multifunctional enzyme</keyword>
<keyword id="KW-0520">NAD</keyword>
<keyword id="KW-0560">Oxidoreductase</keyword>
<keyword id="KW-0597">Phosphoprotein</keyword>
<keyword id="KW-0627">Porphyrin biosynthesis</keyword>
<keyword id="KW-1185">Reference proteome</keyword>
<keyword id="KW-0949">S-adenosyl-L-methionine</keyword>
<keyword id="KW-0808">Transferase</keyword>
<organism>
    <name type="scientific">Cronobacter sakazakii (strain ATCC BAA-894)</name>
    <name type="common">Enterobacter sakazakii</name>
    <dbReference type="NCBI Taxonomy" id="290339"/>
    <lineage>
        <taxon>Bacteria</taxon>
        <taxon>Pseudomonadati</taxon>
        <taxon>Pseudomonadota</taxon>
        <taxon>Gammaproteobacteria</taxon>
        <taxon>Enterobacterales</taxon>
        <taxon>Enterobacteriaceae</taxon>
        <taxon>Cronobacter</taxon>
    </lineage>
</organism>
<gene>
    <name evidence="1" type="primary">cysG1</name>
    <name type="ordered locus">ESA_00538</name>
</gene>
<evidence type="ECO:0000255" key="1">
    <source>
        <dbReference type="HAMAP-Rule" id="MF_01646"/>
    </source>
</evidence>